<reference key="1">
    <citation type="journal article" date="2007" name="Genes Dev.">
        <title>New insights into Acinetobacter baumannii pathogenesis revealed by high-density pyrosequencing and transposon mutagenesis.</title>
        <authorList>
            <person name="Smith M.G."/>
            <person name="Gianoulis T.A."/>
            <person name="Pukatzki S."/>
            <person name="Mekalanos J.J."/>
            <person name="Ornston L.N."/>
            <person name="Gerstein M."/>
            <person name="Snyder M."/>
        </authorList>
    </citation>
    <scope>NUCLEOTIDE SEQUENCE [LARGE SCALE GENOMIC DNA]</scope>
    <source>
        <strain>ATCC 17978 / DSM 105126 / CIP 53.77 / LMG 1025 / NCDC KC755 / 5377</strain>
    </source>
</reference>
<accession>A3M1V9</accession>
<name>RL28_ACIBT</name>
<comment type="similarity">
    <text evidence="1">Belongs to the bacterial ribosomal protein bL28 family.</text>
</comment>
<organism>
    <name type="scientific">Acinetobacter baumannii (strain ATCC 17978 / DSM 105126 / CIP 53.77 / LMG 1025 / NCDC KC755 / 5377)</name>
    <dbReference type="NCBI Taxonomy" id="400667"/>
    <lineage>
        <taxon>Bacteria</taxon>
        <taxon>Pseudomonadati</taxon>
        <taxon>Pseudomonadota</taxon>
        <taxon>Gammaproteobacteria</taxon>
        <taxon>Moraxellales</taxon>
        <taxon>Moraxellaceae</taxon>
        <taxon>Acinetobacter</taxon>
        <taxon>Acinetobacter calcoaceticus/baumannii complex</taxon>
    </lineage>
</organism>
<evidence type="ECO:0000255" key="1">
    <source>
        <dbReference type="HAMAP-Rule" id="MF_00373"/>
    </source>
</evidence>
<evidence type="ECO:0000305" key="2"/>
<gene>
    <name evidence="1" type="primary">rpmB</name>
    <name type="ordered locus">A1S_0448</name>
</gene>
<feature type="chain" id="PRO_1000007154" description="Large ribosomal subunit protein bL28">
    <location>
        <begin position="1"/>
        <end position="78"/>
    </location>
</feature>
<dbReference type="EMBL" id="CP000521">
    <property type="protein sequence ID" value="ABO10903.1"/>
    <property type="molecule type" value="Genomic_DNA"/>
</dbReference>
<dbReference type="RefSeq" id="WP_000048256.1">
    <property type="nucleotide sequence ID" value="NZ_CP053098.1"/>
</dbReference>
<dbReference type="SMR" id="A3M1V9"/>
<dbReference type="GeneID" id="97177253"/>
<dbReference type="KEGG" id="acb:A1S_0448"/>
<dbReference type="HOGENOM" id="CLU_064548_3_1_6"/>
<dbReference type="GO" id="GO:0022625">
    <property type="term" value="C:cytosolic large ribosomal subunit"/>
    <property type="evidence" value="ECO:0007669"/>
    <property type="project" value="TreeGrafter"/>
</dbReference>
<dbReference type="GO" id="GO:0003735">
    <property type="term" value="F:structural constituent of ribosome"/>
    <property type="evidence" value="ECO:0007669"/>
    <property type="project" value="InterPro"/>
</dbReference>
<dbReference type="GO" id="GO:0006412">
    <property type="term" value="P:translation"/>
    <property type="evidence" value="ECO:0007669"/>
    <property type="project" value="UniProtKB-UniRule"/>
</dbReference>
<dbReference type="FunFam" id="2.30.170.40:FF:000001">
    <property type="entry name" value="50S ribosomal protein L28"/>
    <property type="match status" value="1"/>
</dbReference>
<dbReference type="Gene3D" id="2.30.170.40">
    <property type="entry name" value="Ribosomal protein L28/L24"/>
    <property type="match status" value="1"/>
</dbReference>
<dbReference type="HAMAP" id="MF_00373">
    <property type="entry name" value="Ribosomal_bL28"/>
    <property type="match status" value="1"/>
</dbReference>
<dbReference type="InterPro" id="IPR026569">
    <property type="entry name" value="Ribosomal_bL28"/>
</dbReference>
<dbReference type="InterPro" id="IPR034704">
    <property type="entry name" value="Ribosomal_bL28/bL31-like_sf"/>
</dbReference>
<dbReference type="InterPro" id="IPR001383">
    <property type="entry name" value="Ribosomal_bL28_bact-type"/>
</dbReference>
<dbReference type="InterPro" id="IPR037147">
    <property type="entry name" value="Ribosomal_bL28_sf"/>
</dbReference>
<dbReference type="NCBIfam" id="TIGR00009">
    <property type="entry name" value="L28"/>
    <property type="match status" value="1"/>
</dbReference>
<dbReference type="PANTHER" id="PTHR13528">
    <property type="entry name" value="39S RIBOSOMAL PROTEIN L28, MITOCHONDRIAL"/>
    <property type="match status" value="1"/>
</dbReference>
<dbReference type="PANTHER" id="PTHR13528:SF2">
    <property type="entry name" value="LARGE RIBOSOMAL SUBUNIT PROTEIN BL28M"/>
    <property type="match status" value="1"/>
</dbReference>
<dbReference type="Pfam" id="PF00830">
    <property type="entry name" value="Ribosomal_L28"/>
    <property type="match status" value="1"/>
</dbReference>
<dbReference type="SUPFAM" id="SSF143800">
    <property type="entry name" value="L28p-like"/>
    <property type="match status" value="1"/>
</dbReference>
<sequence>MSKVCQVTGKRPVVGNNVSHANNKTKRRFEPNLHHHRFWLESEKRFVRLRLTTKGMRIIDKLGIEKVVADLRAQGQKI</sequence>
<proteinExistence type="inferred from homology"/>
<keyword id="KW-0687">Ribonucleoprotein</keyword>
<keyword id="KW-0689">Ribosomal protein</keyword>
<protein>
    <recommendedName>
        <fullName evidence="1">Large ribosomal subunit protein bL28</fullName>
    </recommendedName>
    <alternativeName>
        <fullName evidence="2">50S ribosomal protein L28</fullName>
    </alternativeName>
</protein>